<sequence>MKNKRMLKIGMCVGILGLSVTSLEAFTGGALQVEAKEKTGQVKHKNQATHKEFSQLEKKFDARLGVYAIDTGTNQTISYRHNERFAFASTYKALAAGVLLQQNSIDTLNEVIKFTKEDLVDYSPVTEKHVDTGMKLGEIAEAAVRSSDNTAGNILFHKIGGPKGYEKALRQIGDRVTMSDRFETELNEAIPGDIRDTSTAKAIASNLKAFTVGNALPAEKRKILTEWMKGNATGDKLIRAGVPTDWIVGDKSGAGSYGTRNDIAIVWPPNRAPIIIAILSSKDEKEATYDNQLIAEAPEVIVKSLK</sequence>
<keyword id="KW-0046">Antibiotic resistance</keyword>
<keyword id="KW-0378">Hydrolase</keyword>
<keyword id="KW-0732">Signal</keyword>
<evidence type="ECO:0000250" key="1"/>
<evidence type="ECO:0000255" key="2">
    <source>
        <dbReference type="PROSITE-ProRule" id="PRU10101"/>
    </source>
</evidence>
<evidence type="ECO:0000305" key="3"/>
<evidence type="ECO:0000305" key="4">
    <source>
    </source>
</evidence>
<proteinExistence type="inferred from homology"/>
<feature type="signal peptide" evidence="1">
    <location>
        <begin position="1"/>
        <end position="43"/>
    </location>
</feature>
<feature type="chain" id="PRO_0000016972" description="Beta-lactamase 1">
    <location>
        <begin position="44"/>
        <end position="306"/>
    </location>
</feature>
<feature type="active site" description="Acyl-ester intermediate" evidence="2">
    <location>
        <position position="89"/>
    </location>
</feature>
<feature type="active site" description="Proton acceptor" evidence="1">
    <location>
        <position position="185"/>
    </location>
</feature>
<feature type="binding site" evidence="1">
    <location>
        <begin position="251"/>
        <end position="253"/>
    </location>
    <ligand>
        <name>substrate</name>
    </ligand>
</feature>
<accession>P28018</accession>
<comment type="function">
    <text>This protein is a beta-lactamase with a substrate specificity for penicillins.</text>
</comment>
<comment type="catalytic activity">
    <reaction evidence="2">
        <text>a beta-lactam + H2O = a substituted beta-amino acid</text>
        <dbReference type="Rhea" id="RHEA:20401"/>
        <dbReference type="ChEBI" id="CHEBI:15377"/>
        <dbReference type="ChEBI" id="CHEBI:35627"/>
        <dbReference type="ChEBI" id="CHEBI:140347"/>
        <dbReference type="EC" id="3.5.2.6"/>
    </reaction>
</comment>
<comment type="miscellaneous">
    <text evidence="4">The class A beta-lactamase family has a specific amino-acid numbering system, sometimes called Ambler or ABL numbering and often misspelt as Amber. A multiple sequence alignment was used to derive a consensus sequence and then the consensus was numbered taking into account insertions and deletions. This allows use of identical numbers, e.g. for active site residues, despite differences in protein length. UniProt always uses natural numbering of residues, hence there appear to be differences in numbering between this entry and some papers.</text>
</comment>
<comment type="similarity">
    <text evidence="3">Belongs to the class-A beta-lactamase family.</text>
</comment>
<reference key="1">
    <citation type="submission" date="1991-09" db="EMBL/GenBank/DDBJ databases">
        <title>The beta-lactamase I gene From Bacillus mycoides.</title>
        <authorList>
            <person name="Groenstad A."/>
            <person name="Kristensen T."/>
            <person name="Hornes E."/>
            <person name="Kolstoe A.-B."/>
        </authorList>
    </citation>
    <scope>NUCLEOTIDE SEQUENCE [GENOMIC DNA]</scope>
    <source>
        <strain>NI10R</strain>
    </source>
</reference>
<reference key="2">
    <citation type="journal article" date="1991" name="Biochem. J.">
        <title>A standard numbering scheme for the class A beta-lactamases.</title>
        <authorList>
            <person name="Ambler R.P."/>
            <person name="Coulson A.F."/>
            <person name="Frere J.M."/>
            <person name="Ghuysen J.M."/>
            <person name="Joris B."/>
            <person name="Forsman M."/>
            <person name="Levesque R.C."/>
            <person name="Tiraby G."/>
            <person name="Waley S.G."/>
        </authorList>
    </citation>
    <scope>AMINO ACID NUMBERING SCHEME</scope>
</reference>
<name>BLA1_BACMY</name>
<organism>
    <name type="scientific">Bacillus mycoides</name>
    <dbReference type="NCBI Taxonomy" id="1405"/>
    <lineage>
        <taxon>Bacteria</taxon>
        <taxon>Bacillati</taxon>
        <taxon>Bacillota</taxon>
        <taxon>Bacilli</taxon>
        <taxon>Bacillales</taxon>
        <taxon>Bacillaceae</taxon>
        <taxon>Bacillus</taxon>
        <taxon>Bacillus cereus group</taxon>
    </lineage>
</organism>
<dbReference type="EC" id="3.5.2.6"/>
<dbReference type="EMBL" id="X62244">
    <property type="protein sequence ID" value="CAA44161.1"/>
    <property type="molecule type" value="Genomic_DNA"/>
</dbReference>
<dbReference type="PIR" id="S17339">
    <property type="entry name" value="S17339"/>
</dbReference>
<dbReference type="SMR" id="P28018"/>
<dbReference type="STRING" id="1405.B7492_13515"/>
<dbReference type="GO" id="GO:0008800">
    <property type="term" value="F:beta-lactamase activity"/>
    <property type="evidence" value="ECO:0007669"/>
    <property type="project" value="UniProtKB-EC"/>
</dbReference>
<dbReference type="GO" id="GO:0030655">
    <property type="term" value="P:beta-lactam antibiotic catabolic process"/>
    <property type="evidence" value="ECO:0007669"/>
    <property type="project" value="InterPro"/>
</dbReference>
<dbReference type="GO" id="GO:0046677">
    <property type="term" value="P:response to antibiotic"/>
    <property type="evidence" value="ECO:0007669"/>
    <property type="project" value="UniProtKB-KW"/>
</dbReference>
<dbReference type="Gene3D" id="3.40.710.10">
    <property type="entry name" value="DD-peptidase/beta-lactamase superfamily"/>
    <property type="match status" value="1"/>
</dbReference>
<dbReference type="InterPro" id="IPR012338">
    <property type="entry name" value="Beta-lactam/transpept-like"/>
</dbReference>
<dbReference type="InterPro" id="IPR045155">
    <property type="entry name" value="Beta-lactam_cat"/>
</dbReference>
<dbReference type="InterPro" id="IPR000871">
    <property type="entry name" value="Beta-lactam_class-A"/>
</dbReference>
<dbReference type="InterPro" id="IPR023650">
    <property type="entry name" value="Beta-lactam_class-A_AS"/>
</dbReference>
<dbReference type="NCBIfam" id="NF033096">
    <property type="entry name" value="bla1"/>
    <property type="match status" value="1"/>
</dbReference>
<dbReference type="NCBIfam" id="NF033103">
    <property type="entry name" value="bla_class_A"/>
    <property type="match status" value="1"/>
</dbReference>
<dbReference type="NCBIfam" id="NF012167">
    <property type="entry name" value="classA_firm"/>
    <property type="match status" value="1"/>
</dbReference>
<dbReference type="PANTHER" id="PTHR35333">
    <property type="entry name" value="BETA-LACTAMASE"/>
    <property type="match status" value="1"/>
</dbReference>
<dbReference type="PANTHER" id="PTHR35333:SF3">
    <property type="entry name" value="BETA-LACTAMASE-TYPE TRANSPEPTIDASE FOLD CONTAINING PROTEIN"/>
    <property type="match status" value="1"/>
</dbReference>
<dbReference type="Pfam" id="PF13354">
    <property type="entry name" value="Beta-lactamase2"/>
    <property type="match status" value="1"/>
</dbReference>
<dbReference type="PRINTS" id="PR00118">
    <property type="entry name" value="BLACTAMASEA"/>
</dbReference>
<dbReference type="SUPFAM" id="SSF56601">
    <property type="entry name" value="beta-lactamase/transpeptidase-like"/>
    <property type="match status" value="1"/>
</dbReference>
<dbReference type="PROSITE" id="PS00146">
    <property type="entry name" value="BETA_LACTAMASE_A"/>
    <property type="match status" value="1"/>
</dbReference>
<protein>
    <recommendedName>
        <fullName>Beta-lactamase 1</fullName>
        <ecNumber>3.5.2.6</ecNumber>
    </recommendedName>
    <alternativeName>
        <fullName>Beta-lactamase I</fullName>
    </alternativeName>
    <alternativeName>
        <fullName>Penicillinase</fullName>
    </alternativeName>
</protein>
<gene>
    <name type="primary">blaCI</name>
</gene>